<protein>
    <recommendedName>
        <fullName>Early E3B 14.5 kDa protein</fullName>
    </recommendedName>
    <alternativeName>
        <fullName>Early E3B 15.2 kDa glycoprotein</fullName>
    </alternativeName>
</protein>
<dbReference type="EMBL" id="M15952">
    <property type="protein sequence ID" value="AAA42488.1"/>
    <property type="molecule type" value="Genomic_DNA"/>
</dbReference>
<dbReference type="PIR" id="I29500">
    <property type="entry name" value="ERAD28"/>
</dbReference>
<dbReference type="GO" id="GO:0033644">
    <property type="term" value="C:host cell membrane"/>
    <property type="evidence" value="ECO:0007669"/>
    <property type="project" value="UniProtKB-SubCell"/>
</dbReference>
<dbReference type="GO" id="GO:0016020">
    <property type="term" value="C:membrane"/>
    <property type="evidence" value="ECO:0007669"/>
    <property type="project" value="UniProtKB-KW"/>
</dbReference>
<dbReference type="GO" id="GO:0009966">
    <property type="term" value="P:regulation of signal transduction"/>
    <property type="evidence" value="ECO:0007669"/>
    <property type="project" value="InterPro"/>
</dbReference>
<dbReference type="InterPro" id="IPR008131">
    <property type="entry name" value="Adeno_E3_14_5"/>
</dbReference>
<dbReference type="Pfam" id="PF04834">
    <property type="entry name" value="Adeno_E3_14_5"/>
    <property type="match status" value="1"/>
</dbReference>
<proteinExistence type="inferred from homology"/>
<feature type="signal peptide" evidence="2">
    <location>
        <begin position="1"/>
        <end position="21"/>
    </location>
</feature>
<feature type="chain" id="PRO_0000036478" description="Early E3B 14.5 kDa protein">
    <location>
        <begin position="22"/>
        <end position="134"/>
    </location>
</feature>
<feature type="transmembrane region" description="Helical" evidence="2">
    <location>
        <begin position="54"/>
        <end position="78"/>
    </location>
</feature>
<reference key="1">
    <citation type="journal article" date="1986" name="Gene">
        <title>Region E3 of human adenoviruses; differences between the oncogenic adenovirus-3 and the non-oncogenic adenovirus-2.</title>
        <authorList>
            <person name="Signaes C."/>
            <person name="Akusjaervi G."/>
            <person name="Pettersson U."/>
        </authorList>
    </citation>
    <scope>NUCLEOTIDE SEQUENCE [GENOMIC DNA]</scope>
</reference>
<comment type="function">
    <text>Down-regulates the EGF receptor and prevents cytolysis by TNF.</text>
</comment>
<comment type="subcellular location">
    <subcellularLocation>
        <location evidence="3">Host membrane</location>
        <topology evidence="3">Single-pass membrane protein</topology>
    </subcellularLocation>
</comment>
<comment type="PTM">
    <text evidence="1">Phosphorylated on serine; O-glycosylated, but not N-glycosylated.</text>
</comment>
<comment type="similarity">
    <text evidence="3">Belongs to the adenoviridae E3_14 family.</text>
</comment>
<organismHost>
    <name type="scientific">Homo sapiens</name>
    <name type="common">Human</name>
    <dbReference type="NCBI Taxonomy" id="9606"/>
</organismHost>
<sequence length="134" mass="15240">MQAMLPVILILLLPCIPLASTATRATPEQLRKCKFQQPWSFLDCYHEKSDFPTYWIVIVGIINILSCTFFSITIYPTFNFGWNSPNALGYPQEPDEHIPLQHIQQPLALVQYENEPQPSLPPAISYFNLTGGDD</sequence>
<name>E3B14_ADE03</name>
<accession>P11316</accession>
<keyword id="KW-0244">Early protein</keyword>
<keyword id="KW-0325">Glycoprotein</keyword>
<keyword id="KW-1043">Host membrane</keyword>
<keyword id="KW-0472">Membrane</keyword>
<keyword id="KW-0597">Phosphoprotein</keyword>
<keyword id="KW-0732">Signal</keyword>
<keyword id="KW-0812">Transmembrane</keyword>
<keyword id="KW-1133">Transmembrane helix</keyword>
<evidence type="ECO:0000250" key="1"/>
<evidence type="ECO:0000255" key="2"/>
<evidence type="ECO:0000305" key="3"/>
<organism>
    <name type="scientific">Human adenovirus B serotype 3</name>
    <name type="common">HAdV-3</name>
    <name type="synonym">Human adenovirus 3</name>
    <dbReference type="NCBI Taxonomy" id="45659"/>
    <lineage>
        <taxon>Viruses</taxon>
        <taxon>Varidnaviria</taxon>
        <taxon>Bamfordvirae</taxon>
        <taxon>Preplasmiviricota</taxon>
        <taxon>Tectiliviricetes</taxon>
        <taxon>Rowavirales</taxon>
        <taxon>Adenoviridae</taxon>
        <taxon>Mastadenovirus</taxon>
        <taxon>Human mastadenovirus B</taxon>
    </lineage>
</organism>